<comment type="function">
    <text evidence="3">Cytokine that plays a crucial role in innate immunity of the epithelium, including to intestinal bacterial pathogens, in an autocrine manner. Stimulates the production of antibacterial peptides and pro-inflammatory molecules for host defense by signaling through the NF-kappa-B and MAPK pathways. Acts synergically with IL22 in inducing the expression of antibacterial peptides, including S100A8, S100A9, REG3A and REG3G. Synergy is also observed with TNF and IL1B in inducing DEFB2 from keratinocytes. Depending on the type of insult, may have both protective and pathogenic properties, either by maintaining epithelial homeostasis after an inflammatory challenge or by promoting inflammatory phenotype. Enhanced IL17C/IL17RE signaling may also lead to greater susceptibility to autoimmune diseases.</text>
</comment>
<comment type="subunit">
    <text>Binds to a heterodimer formed by IL17RA and IL17RE.</text>
</comment>
<comment type="subcellular location">
    <subcellularLocation>
        <location>Secreted</location>
    </subcellularLocation>
</comment>
<comment type="induction">
    <text evidence="3 4">Up-regulated by bacterial stimuli, including by lipopolysaccharides (LPS) in gut epithelial cell lines. This up-regulation may be mediated by Toll-like receptors TLR2 and TLR5. Up-regulated by various pro-inflammatory cytokines, including TNF, IL1B and IL17F. Up-regulation by IL17A in colon epithelial cells has been observed in some cases (PubMed:21993849), but not in others (PubMed:21993848).</text>
</comment>
<comment type="similarity">
    <text evidence="5">Belongs to the IL-17 family.</text>
</comment>
<comment type="online information" name="Wikipedia">
    <link uri="https://en.wikipedia.org/wiki/Interleukin_17"/>
    <text>Interleukin-17 entry</text>
</comment>
<name>IL17C_HUMAN</name>
<keyword id="KW-0202">Cytokine</keyword>
<keyword id="KW-1015">Disulfide bond</keyword>
<keyword id="KW-0395">Inflammatory response</keyword>
<keyword id="KW-1185">Reference proteome</keyword>
<keyword id="KW-0964">Secreted</keyword>
<keyword id="KW-0732">Signal</keyword>
<evidence type="ECO:0000250" key="1"/>
<evidence type="ECO:0000255" key="2"/>
<evidence type="ECO:0000269" key="3">
    <source>
    </source>
</evidence>
<evidence type="ECO:0000269" key="4">
    <source>
    </source>
</evidence>
<evidence type="ECO:0000305" key="5"/>
<accession>Q9P0M4</accession>
<accession>Q3MIG8</accession>
<accession>Q9HC75</accession>
<dbReference type="EMBL" id="AF152099">
    <property type="protein sequence ID" value="AAF28105.1"/>
    <property type="molecule type" value="mRNA"/>
</dbReference>
<dbReference type="EMBL" id="AF142410">
    <property type="protein sequence ID" value="AAG27921.1"/>
    <property type="molecule type" value="mRNA"/>
</dbReference>
<dbReference type="EMBL" id="AY358471">
    <property type="protein sequence ID" value="AAQ88835.1"/>
    <property type="molecule type" value="mRNA"/>
</dbReference>
<dbReference type="EMBL" id="BC069152">
    <property type="protein sequence ID" value="AAH69152.1"/>
    <property type="molecule type" value="mRNA"/>
</dbReference>
<dbReference type="EMBL" id="BC101835">
    <property type="protein sequence ID" value="AAI01836.1"/>
    <property type="molecule type" value="mRNA"/>
</dbReference>
<dbReference type="EMBL" id="BC112196">
    <property type="protein sequence ID" value="AAI12197.1"/>
    <property type="molecule type" value="mRNA"/>
</dbReference>
<dbReference type="CCDS" id="CCDS42217.1"/>
<dbReference type="RefSeq" id="NP_037410.1">
    <property type="nucleotide sequence ID" value="NM_013278.4"/>
</dbReference>
<dbReference type="SMR" id="Q9P0M4"/>
<dbReference type="ComplexPortal" id="CPX-9207">
    <property type="entry name" value="Interleukin-17C receptor-ligand complex"/>
</dbReference>
<dbReference type="ComplexPortal" id="CPX-9305">
    <property type="entry name" value="Interleukin-17C complex"/>
</dbReference>
<dbReference type="CORUM" id="Q9P0M4"/>
<dbReference type="FunCoup" id="Q9P0M4">
    <property type="interactions" value="494"/>
</dbReference>
<dbReference type="STRING" id="9606.ENSP00000244241"/>
<dbReference type="ChEMBL" id="CHEMBL5483004"/>
<dbReference type="GlyGen" id="Q9P0M4">
    <property type="glycosylation" value="1 site"/>
</dbReference>
<dbReference type="BioMuta" id="IL17C"/>
<dbReference type="DMDM" id="20138769"/>
<dbReference type="MassIVE" id="Q9P0M4"/>
<dbReference type="PaxDb" id="9606-ENSP00000244241"/>
<dbReference type="PeptideAtlas" id="Q9P0M4"/>
<dbReference type="ProteomicsDB" id="83579"/>
<dbReference type="Antibodypedia" id="30734">
    <property type="antibodies" value="331 antibodies from 26 providers"/>
</dbReference>
<dbReference type="DNASU" id="27189"/>
<dbReference type="Ensembl" id="ENST00000244241.5">
    <property type="protein sequence ID" value="ENSP00000244241.4"/>
    <property type="gene ID" value="ENSG00000124391.5"/>
</dbReference>
<dbReference type="GeneID" id="27189"/>
<dbReference type="KEGG" id="hsa:27189"/>
<dbReference type="MANE-Select" id="ENST00000244241.5">
    <property type="protein sequence ID" value="ENSP00000244241.4"/>
    <property type="RefSeq nucleotide sequence ID" value="NM_013278.4"/>
    <property type="RefSeq protein sequence ID" value="NP_037410.1"/>
</dbReference>
<dbReference type="UCSC" id="uc002fla.4">
    <property type="organism name" value="human"/>
</dbReference>
<dbReference type="AGR" id="HGNC:5983"/>
<dbReference type="CTD" id="27189"/>
<dbReference type="DisGeNET" id="27189"/>
<dbReference type="GeneCards" id="IL17C"/>
<dbReference type="HGNC" id="HGNC:5983">
    <property type="gene designation" value="IL17C"/>
</dbReference>
<dbReference type="HPA" id="ENSG00000124391">
    <property type="expression patterns" value="Tissue enhanced (endometrium, urinary bladder)"/>
</dbReference>
<dbReference type="MIM" id="604628">
    <property type="type" value="gene"/>
</dbReference>
<dbReference type="neXtProt" id="NX_Q9P0M4"/>
<dbReference type="OpenTargets" id="ENSG00000124391"/>
<dbReference type="PharmGKB" id="PA29797"/>
<dbReference type="VEuPathDB" id="HostDB:ENSG00000124391"/>
<dbReference type="eggNOG" id="ENOG502S2UJ">
    <property type="taxonomic scope" value="Eukaryota"/>
</dbReference>
<dbReference type="GeneTree" id="ENSGT00940000161887"/>
<dbReference type="HOGENOM" id="CLU_121730_0_0_1"/>
<dbReference type="InParanoid" id="Q9P0M4"/>
<dbReference type="OMA" id="FAFHAEF"/>
<dbReference type="OrthoDB" id="6038945at2759"/>
<dbReference type="PAN-GO" id="Q9P0M4">
    <property type="GO annotations" value="0 GO annotations based on evolutionary models"/>
</dbReference>
<dbReference type="PhylomeDB" id="Q9P0M4"/>
<dbReference type="TreeFam" id="TF314701"/>
<dbReference type="PathwayCommons" id="Q9P0M4"/>
<dbReference type="Reactome" id="R-HSA-448424">
    <property type="pathway name" value="Interleukin-17 signaling"/>
</dbReference>
<dbReference type="BioGRID-ORCS" id="27189">
    <property type="hits" value="12 hits in 1147 CRISPR screens"/>
</dbReference>
<dbReference type="GenomeRNAi" id="27189"/>
<dbReference type="Pharos" id="Q9P0M4">
    <property type="development level" value="Tbio"/>
</dbReference>
<dbReference type="PRO" id="PR:Q9P0M4"/>
<dbReference type="Proteomes" id="UP000005640">
    <property type="component" value="Chromosome 16"/>
</dbReference>
<dbReference type="RNAct" id="Q9P0M4">
    <property type="molecule type" value="protein"/>
</dbReference>
<dbReference type="Bgee" id="ENSG00000124391">
    <property type="expression patterns" value="Expressed in nasal cavity epithelium and 118 other cell types or tissues"/>
</dbReference>
<dbReference type="GO" id="GO:0005576">
    <property type="term" value="C:extracellular region"/>
    <property type="evidence" value="ECO:0000304"/>
    <property type="project" value="Reactome"/>
</dbReference>
<dbReference type="GO" id="GO:0005615">
    <property type="term" value="C:extracellular space"/>
    <property type="evidence" value="ECO:0000304"/>
    <property type="project" value="ProtInc"/>
</dbReference>
<dbReference type="GO" id="GO:0005125">
    <property type="term" value="F:cytokine activity"/>
    <property type="evidence" value="ECO:0000304"/>
    <property type="project" value="ProtInc"/>
</dbReference>
<dbReference type="GO" id="GO:0007166">
    <property type="term" value="P:cell surface receptor signaling pathway"/>
    <property type="evidence" value="ECO:0000304"/>
    <property type="project" value="ProtInc"/>
</dbReference>
<dbReference type="GO" id="GO:0007267">
    <property type="term" value="P:cell-cell signaling"/>
    <property type="evidence" value="ECO:0000304"/>
    <property type="project" value="ProtInc"/>
</dbReference>
<dbReference type="GO" id="GO:0006954">
    <property type="term" value="P:inflammatory response"/>
    <property type="evidence" value="ECO:0000304"/>
    <property type="project" value="ProtInc"/>
</dbReference>
<dbReference type="FunFam" id="2.10.90.10:FF:000046">
    <property type="entry name" value="Interleukin 17C"/>
    <property type="match status" value="1"/>
</dbReference>
<dbReference type="Gene3D" id="2.10.90.10">
    <property type="entry name" value="Cystine-knot cytokines"/>
    <property type="match status" value="1"/>
</dbReference>
<dbReference type="InterPro" id="IPR029034">
    <property type="entry name" value="Cystine-knot_cytokine"/>
</dbReference>
<dbReference type="InterPro" id="IPR020440">
    <property type="entry name" value="IL-17_chr"/>
</dbReference>
<dbReference type="InterPro" id="IPR010345">
    <property type="entry name" value="IL-17_fam"/>
</dbReference>
<dbReference type="Pfam" id="PF06083">
    <property type="entry name" value="IL17"/>
    <property type="match status" value="1"/>
</dbReference>
<dbReference type="PRINTS" id="PR01932">
    <property type="entry name" value="INTRLEUKIN17"/>
</dbReference>
<dbReference type="SUPFAM" id="SSF57501">
    <property type="entry name" value="Cystine-knot cytokines"/>
    <property type="match status" value="1"/>
</dbReference>
<reference key="1">
    <citation type="journal article" date="2000" name="Proc. Natl. Acad. Sci. U.S.A.">
        <title>Cloning and characterization of IL-17B and IL-17C, two new members of the IL-17 cytokine family.</title>
        <authorList>
            <person name="Li H."/>
            <person name="Chen J."/>
            <person name="Huang A."/>
            <person name="Stinson J."/>
            <person name="Heldens S."/>
            <person name="Foster J."/>
            <person name="Dowd P."/>
            <person name="Gurney A.L."/>
            <person name="Wood W.I."/>
        </authorList>
    </citation>
    <scope>NUCLEOTIDE SEQUENCE [MRNA]</scope>
</reference>
<reference key="2">
    <citation type="submission" date="1999-04" db="EMBL/GenBank/DDBJ databases">
        <title>Novel human cytokine CX2 with homology to IL-17.</title>
        <authorList>
            <person name="Zhang W."/>
            <person name="He L."/>
            <person name="Wan T."/>
            <person name="Yuan Z."/>
            <person name="Cao X."/>
        </authorList>
    </citation>
    <scope>NUCLEOTIDE SEQUENCE [MRNA]</scope>
</reference>
<reference key="3">
    <citation type="journal article" date="2003" name="Genome Res.">
        <title>The secreted protein discovery initiative (SPDI), a large-scale effort to identify novel human secreted and transmembrane proteins: a bioinformatics assessment.</title>
        <authorList>
            <person name="Clark H.F."/>
            <person name="Gurney A.L."/>
            <person name="Abaya E."/>
            <person name="Baker K."/>
            <person name="Baldwin D.T."/>
            <person name="Brush J."/>
            <person name="Chen J."/>
            <person name="Chow B."/>
            <person name="Chui C."/>
            <person name="Crowley C."/>
            <person name="Currell B."/>
            <person name="Deuel B."/>
            <person name="Dowd P."/>
            <person name="Eaton D."/>
            <person name="Foster J.S."/>
            <person name="Grimaldi C."/>
            <person name="Gu Q."/>
            <person name="Hass P.E."/>
            <person name="Heldens S."/>
            <person name="Huang A."/>
            <person name="Kim H.S."/>
            <person name="Klimowski L."/>
            <person name="Jin Y."/>
            <person name="Johnson S."/>
            <person name="Lee J."/>
            <person name="Lewis L."/>
            <person name="Liao D."/>
            <person name="Mark M.R."/>
            <person name="Robbie E."/>
            <person name="Sanchez C."/>
            <person name="Schoenfeld J."/>
            <person name="Seshagiri S."/>
            <person name="Simmons L."/>
            <person name="Singh J."/>
            <person name="Smith V."/>
            <person name="Stinson J."/>
            <person name="Vagts A."/>
            <person name="Vandlen R.L."/>
            <person name="Watanabe C."/>
            <person name="Wieand D."/>
            <person name="Woods K."/>
            <person name="Xie M.-H."/>
            <person name="Yansura D.G."/>
            <person name="Yi S."/>
            <person name="Yu G."/>
            <person name="Yuan J."/>
            <person name="Zhang M."/>
            <person name="Zhang Z."/>
            <person name="Goddard A.D."/>
            <person name="Wood W.I."/>
            <person name="Godowski P.J."/>
            <person name="Gray A.M."/>
        </authorList>
    </citation>
    <scope>NUCLEOTIDE SEQUENCE [LARGE SCALE MRNA]</scope>
</reference>
<reference key="4">
    <citation type="journal article" date="2004" name="Genome Res.">
        <title>The status, quality, and expansion of the NIH full-length cDNA project: the Mammalian Gene Collection (MGC).</title>
        <authorList>
            <consortium name="The MGC Project Team"/>
        </authorList>
    </citation>
    <scope>NUCLEOTIDE SEQUENCE [LARGE SCALE MRNA]</scope>
    <source>
        <tissue>Lung</tissue>
    </source>
</reference>
<reference key="5">
    <citation type="journal article" date="2011" name="Nat. Immunol.">
        <title>IL-17RE is the functional receptor for IL-17C and mediates mucosal immunity to infection with intestinal pathogens.</title>
        <authorList>
            <person name="Song X."/>
            <person name="Zhu S."/>
            <person name="Shi P."/>
            <person name="Liu Y."/>
            <person name="Shi Y."/>
            <person name="Levin S.D."/>
            <person name="Qian Y."/>
        </authorList>
    </citation>
    <scope>INDUCTION</scope>
</reference>
<reference key="6">
    <citation type="journal article" date="2011" name="Nat. Immunol.">
        <title>IL-17C regulates the innate immune function of epithelial cells in an autocrine manner.</title>
        <authorList>
            <person name="Ramirez-Carrozzi V."/>
            <person name="Sambandam A."/>
            <person name="Luis E."/>
            <person name="Lin Z."/>
            <person name="Jeet S."/>
            <person name="Lesch J."/>
            <person name="Hackney J."/>
            <person name="Kim J."/>
            <person name="Zhou M."/>
            <person name="Lai J."/>
            <person name="Modrusan Z."/>
            <person name="Sai T."/>
            <person name="Lee W."/>
            <person name="Xu M."/>
            <person name="Caplazi P."/>
            <person name="Diehl L."/>
            <person name="de Voss J."/>
            <person name="Balazs M."/>
            <person name="Gonzalez L. Jr."/>
            <person name="Singh H."/>
            <person name="Ouyang W."/>
            <person name="Pappu R."/>
        </authorList>
    </citation>
    <scope>FUNCTION</scope>
    <scope>INTERACTION WITH IL17RA AND IL17RE</scope>
    <scope>INDUCTION</scope>
    <scope>TISSUE SPECIFICITY</scope>
</reference>
<feature type="signal peptide" evidence="2">
    <location>
        <begin position="1"/>
        <end position="18"/>
    </location>
</feature>
<feature type="chain" id="PRO_0000015429" description="Interleukin-17C">
    <location>
        <begin position="19"/>
        <end position="197"/>
    </location>
</feature>
<feature type="disulfide bond" evidence="1">
    <location>
        <begin position="129"/>
        <end position="189"/>
    </location>
</feature>
<feature type="disulfide bond" evidence="1">
    <location>
        <begin position="134"/>
        <end position="191"/>
    </location>
</feature>
<feature type="sequence variant" id="VAR_049598" description="In dbSNP:rs11465492.">
    <original>R</original>
    <variation>G</variation>
    <location>
        <position position="25"/>
    </location>
</feature>
<feature type="sequence conflict" description="In Ref. 2; AAG27921." evidence="5" ref="2">
    <original>H</original>
    <variation>R</variation>
    <location>
        <position position="50"/>
    </location>
</feature>
<sequence>MTLLPGLLFLTWLHTCLAHHDPSLRGHPHSHGTPHCYSAEELPLGQAPPHLLARGAKWGQALPVALVSSLEAASHRGRHERPSATTQCPVLRPEEVLEADTHQRSISPWRYRVDTDEDRYPQKLAFAECLCRGCIDARTGRETAALNSVRLLQSLLVLRRRPCSRDGSGLPTPGAFAFHTEFIHVPVGCTCVLPRSV</sequence>
<proteinExistence type="evidence at protein level"/>
<organism>
    <name type="scientific">Homo sapiens</name>
    <name type="common">Human</name>
    <dbReference type="NCBI Taxonomy" id="9606"/>
    <lineage>
        <taxon>Eukaryota</taxon>
        <taxon>Metazoa</taxon>
        <taxon>Chordata</taxon>
        <taxon>Craniata</taxon>
        <taxon>Vertebrata</taxon>
        <taxon>Euteleostomi</taxon>
        <taxon>Mammalia</taxon>
        <taxon>Eutheria</taxon>
        <taxon>Euarchontoglires</taxon>
        <taxon>Primates</taxon>
        <taxon>Haplorrhini</taxon>
        <taxon>Catarrhini</taxon>
        <taxon>Hominidae</taxon>
        <taxon>Homo</taxon>
    </lineage>
</organism>
<protein>
    <recommendedName>
        <fullName>Interleukin-17C</fullName>
        <shortName>IL-17C</shortName>
    </recommendedName>
    <alternativeName>
        <fullName>Cytokine CX2</fullName>
    </alternativeName>
</protein>
<gene>
    <name type="primary">IL17C</name>
    <name type="ORF">UNQ561/PRO1122</name>
</gene>